<reference key="1">
    <citation type="journal article" date="2006" name="Proc. Natl. Acad. Sci. U.S.A.">
        <title>Identification of genes subject to positive selection in uropathogenic strains of Escherichia coli: a comparative genomics approach.</title>
        <authorList>
            <person name="Chen S.L."/>
            <person name="Hung C.-S."/>
            <person name="Xu J."/>
            <person name="Reigstad C.S."/>
            <person name="Magrini V."/>
            <person name="Sabo A."/>
            <person name="Blasiar D."/>
            <person name="Bieri T."/>
            <person name="Meyer R.R."/>
            <person name="Ozersky P."/>
            <person name="Armstrong J.R."/>
            <person name="Fulton R.S."/>
            <person name="Latreille J.P."/>
            <person name="Spieth J."/>
            <person name="Hooton T.M."/>
            <person name="Mardis E.R."/>
            <person name="Hultgren S.J."/>
            <person name="Gordon J.I."/>
        </authorList>
    </citation>
    <scope>NUCLEOTIDE SEQUENCE [LARGE SCALE GENOMIC DNA]</scope>
    <source>
        <strain>UTI89 / UPEC</strain>
    </source>
</reference>
<feature type="chain" id="PRO_1000045547" description="Fumarate reductase subunit D">
    <location>
        <begin position="1"/>
        <end position="119"/>
    </location>
</feature>
<feature type="transmembrane region" description="Helical" evidence="1">
    <location>
        <begin position="26"/>
        <end position="46"/>
    </location>
</feature>
<feature type="transmembrane region" description="Helical" evidence="1">
    <location>
        <begin position="55"/>
        <end position="75"/>
    </location>
</feature>
<feature type="transmembrane region" description="Helical" evidence="1">
    <location>
        <begin position="99"/>
        <end position="119"/>
    </location>
</feature>
<gene>
    <name evidence="1" type="primary">frdD</name>
    <name type="ordered locus">UTI89_C4751</name>
</gene>
<proteinExistence type="inferred from homology"/>
<protein>
    <recommendedName>
        <fullName evidence="1">Fumarate reductase subunit D</fullName>
    </recommendedName>
    <alternativeName>
        <fullName evidence="1">Fumarate reductase 13 kDa hydrophobic protein</fullName>
    </alternativeName>
    <alternativeName>
        <fullName evidence="1">Quinol-fumarate reductase subunit D</fullName>
        <shortName evidence="1">QFR subunit D</shortName>
    </alternativeName>
</protein>
<sequence>MINPNPKRSDEPVFWGLFGAGGMWSAIIAPVMILLVGILLPLGLFPGDALSYERVLAFAQSFIGRVFLFLMIVLPLWCGLHRMHHAMHDLKIHVPAGKWVFYGLAAILTVVTLIGVVTI</sequence>
<keyword id="KW-0997">Cell inner membrane</keyword>
<keyword id="KW-1003">Cell membrane</keyword>
<keyword id="KW-0472">Membrane</keyword>
<keyword id="KW-0812">Transmembrane</keyword>
<keyword id="KW-1133">Transmembrane helix</keyword>
<name>FRDD_ECOUT</name>
<accession>Q1R3A6</accession>
<dbReference type="EMBL" id="CP000243">
    <property type="protein sequence ID" value="ABE10158.1"/>
    <property type="molecule type" value="Genomic_DNA"/>
</dbReference>
<dbReference type="RefSeq" id="WP_000609663.1">
    <property type="nucleotide sequence ID" value="NZ_CP064825.1"/>
</dbReference>
<dbReference type="SMR" id="Q1R3A6"/>
<dbReference type="GeneID" id="75169672"/>
<dbReference type="KEGG" id="eci:UTI89_C4751"/>
<dbReference type="HOGENOM" id="CLU_168367_0_0_6"/>
<dbReference type="Proteomes" id="UP000001952">
    <property type="component" value="Chromosome"/>
</dbReference>
<dbReference type="GO" id="GO:0045283">
    <property type="term" value="C:fumarate reductase complex"/>
    <property type="evidence" value="ECO:0007669"/>
    <property type="project" value="UniProtKB-UniRule"/>
</dbReference>
<dbReference type="GO" id="GO:0005886">
    <property type="term" value="C:plasma membrane"/>
    <property type="evidence" value="ECO:0007669"/>
    <property type="project" value="UniProtKB-SubCell"/>
</dbReference>
<dbReference type="GO" id="GO:0000104">
    <property type="term" value="F:succinate dehydrogenase activity"/>
    <property type="evidence" value="ECO:0007669"/>
    <property type="project" value="UniProtKB-UniRule"/>
</dbReference>
<dbReference type="GO" id="GO:0006106">
    <property type="term" value="P:fumarate metabolic process"/>
    <property type="evidence" value="ECO:0007669"/>
    <property type="project" value="InterPro"/>
</dbReference>
<dbReference type="CDD" id="cd00547">
    <property type="entry name" value="QFR_TypeD_subunitD"/>
    <property type="match status" value="1"/>
</dbReference>
<dbReference type="FunFam" id="1.20.1300.10:FF:000002">
    <property type="entry name" value="Fumarate reductase subunit D"/>
    <property type="match status" value="1"/>
</dbReference>
<dbReference type="Gene3D" id="1.20.1300.10">
    <property type="entry name" value="Fumarate reductase/succinate dehydrogenase, transmembrane subunit"/>
    <property type="match status" value="1"/>
</dbReference>
<dbReference type="HAMAP" id="MF_00709">
    <property type="entry name" value="Fumarate_red_D"/>
    <property type="match status" value="1"/>
</dbReference>
<dbReference type="InterPro" id="IPR003418">
    <property type="entry name" value="Fumarate_red_D"/>
</dbReference>
<dbReference type="InterPro" id="IPR034804">
    <property type="entry name" value="SQR/QFR_C/D"/>
</dbReference>
<dbReference type="NCBIfam" id="NF003977">
    <property type="entry name" value="PRK05470.1-1"/>
    <property type="match status" value="1"/>
</dbReference>
<dbReference type="Pfam" id="PF02313">
    <property type="entry name" value="Fumarate_red_D"/>
    <property type="match status" value="1"/>
</dbReference>
<dbReference type="PIRSF" id="PIRSF000179">
    <property type="entry name" value="FrdD"/>
    <property type="match status" value="1"/>
</dbReference>
<dbReference type="SUPFAM" id="SSF81343">
    <property type="entry name" value="Fumarate reductase respiratory complex transmembrane subunits"/>
    <property type="match status" value="1"/>
</dbReference>
<evidence type="ECO:0000255" key="1">
    <source>
        <dbReference type="HAMAP-Rule" id="MF_00709"/>
    </source>
</evidence>
<organism>
    <name type="scientific">Escherichia coli (strain UTI89 / UPEC)</name>
    <dbReference type="NCBI Taxonomy" id="364106"/>
    <lineage>
        <taxon>Bacteria</taxon>
        <taxon>Pseudomonadati</taxon>
        <taxon>Pseudomonadota</taxon>
        <taxon>Gammaproteobacteria</taxon>
        <taxon>Enterobacterales</taxon>
        <taxon>Enterobacteriaceae</taxon>
        <taxon>Escherichia</taxon>
    </lineage>
</organism>
<comment type="function">
    <text evidence="1">Two distinct, membrane-bound, FAD-containing enzymes are responsible for the catalysis of fumarate and succinate interconversion; fumarate reductase is used in anaerobic growth, and succinate dehydrogenase is used in aerobic growth. Anchors the catalytic components of the fumarate reductase complex to the cell inner membrane, binds quinones.</text>
</comment>
<comment type="subunit">
    <text evidence="1">Part of an enzyme complex containing four subunits: a flavoprotein (FrdA), an iron-sulfur protein (FrdB), and two hydrophobic anchor proteins (FrdC and FrdD).</text>
</comment>
<comment type="subcellular location">
    <subcellularLocation>
        <location evidence="1">Cell inner membrane</location>
        <topology evidence="1">Multi-pass membrane protein</topology>
    </subcellularLocation>
</comment>
<comment type="similarity">
    <text evidence="1">Belongs to the FrdD family.</text>
</comment>